<reference key="1">
    <citation type="submission" date="2007-06" db="EMBL/GenBank/DDBJ databases">
        <title>Complete sequence of chromosome of Staphylococcus aureus subsp. aureus JH1.</title>
        <authorList>
            <consortium name="US DOE Joint Genome Institute"/>
            <person name="Copeland A."/>
            <person name="Lucas S."/>
            <person name="Lapidus A."/>
            <person name="Barry K."/>
            <person name="Detter J.C."/>
            <person name="Glavina del Rio T."/>
            <person name="Hammon N."/>
            <person name="Israni S."/>
            <person name="Dalin E."/>
            <person name="Tice H."/>
            <person name="Pitluck S."/>
            <person name="Chain P."/>
            <person name="Malfatti S."/>
            <person name="Shin M."/>
            <person name="Vergez L."/>
            <person name="Schmutz J."/>
            <person name="Larimer F."/>
            <person name="Land M."/>
            <person name="Hauser L."/>
            <person name="Kyrpides N."/>
            <person name="Ivanova N."/>
            <person name="Tomasz A."/>
            <person name="Richardson P."/>
        </authorList>
    </citation>
    <scope>NUCLEOTIDE SEQUENCE [LARGE SCALE GENOMIC DNA]</scope>
    <source>
        <strain>JH1</strain>
    </source>
</reference>
<name>AROC_STAA2</name>
<accession>A6U1T5</accession>
<protein>
    <recommendedName>
        <fullName evidence="1">Chorismate synthase</fullName>
        <shortName evidence="1">CS</shortName>
        <ecNumber evidence="1">4.2.3.5</ecNumber>
    </recommendedName>
    <alternativeName>
        <fullName evidence="1">5-enolpyruvylshikimate-3-phosphate phospholyase</fullName>
    </alternativeName>
</protein>
<proteinExistence type="inferred from homology"/>
<feature type="chain" id="PRO_1000079011" description="Chorismate synthase">
    <location>
        <begin position="1"/>
        <end position="388"/>
    </location>
</feature>
<feature type="binding site" evidence="1">
    <location>
        <position position="39"/>
    </location>
    <ligand>
        <name>NADP(+)</name>
        <dbReference type="ChEBI" id="CHEBI:58349"/>
    </ligand>
</feature>
<feature type="binding site" evidence="1">
    <location>
        <position position="45"/>
    </location>
    <ligand>
        <name>NADP(+)</name>
        <dbReference type="ChEBI" id="CHEBI:58349"/>
    </ligand>
</feature>
<feature type="binding site" evidence="1">
    <location>
        <begin position="132"/>
        <end position="134"/>
    </location>
    <ligand>
        <name>FMN</name>
        <dbReference type="ChEBI" id="CHEBI:58210"/>
    </ligand>
</feature>
<feature type="binding site" evidence="1">
    <location>
        <begin position="251"/>
        <end position="252"/>
    </location>
    <ligand>
        <name>FMN</name>
        <dbReference type="ChEBI" id="CHEBI:58210"/>
    </ligand>
</feature>
<feature type="binding site" evidence="1">
    <location>
        <position position="296"/>
    </location>
    <ligand>
        <name>FMN</name>
        <dbReference type="ChEBI" id="CHEBI:58210"/>
    </ligand>
</feature>
<feature type="binding site" evidence="1">
    <location>
        <begin position="311"/>
        <end position="315"/>
    </location>
    <ligand>
        <name>FMN</name>
        <dbReference type="ChEBI" id="CHEBI:58210"/>
    </ligand>
</feature>
<feature type="binding site" evidence="1">
    <location>
        <position position="337"/>
    </location>
    <ligand>
        <name>FMN</name>
        <dbReference type="ChEBI" id="CHEBI:58210"/>
    </ligand>
</feature>
<dbReference type="EC" id="4.2.3.5" evidence="1"/>
<dbReference type="EMBL" id="CP000736">
    <property type="protein sequence ID" value="ABR52403.1"/>
    <property type="molecule type" value="Genomic_DNA"/>
</dbReference>
<dbReference type="SMR" id="A6U1T5"/>
<dbReference type="KEGG" id="sah:SaurJH1_1554"/>
<dbReference type="HOGENOM" id="CLU_034547_2_0_9"/>
<dbReference type="UniPathway" id="UPA00053">
    <property type="reaction ID" value="UER00090"/>
</dbReference>
<dbReference type="GO" id="GO:0005829">
    <property type="term" value="C:cytosol"/>
    <property type="evidence" value="ECO:0007669"/>
    <property type="project" value="TreeGrafter"/>
</dbReference>
<dbReference type="GO" id="GO:0004107">
    <property type="term" value="F:chorismate synthase activity"/>
    <property type="evidence" value="ECO:0007669"/>
    <property type="project" value="UniProtKB-UniRule"/>
</dbReference>
<dbReference type="GO" id="GO:0010181">
    <property type="term" value="F:FMN binding"/>
    <property type="evidence" value="ECO:0007669"/>
    <property type="project" value="TreeGrafter"/>
</dbReference>
<dbReference type="GO" id="GO:0008652">
    <property type="term" value="P:amino acid biosynthetic process"/>
    <property type="evidence" value="ECO:0007669"/>
    <property type="project" value="UniProtKB-KW"/>
</dbReference>
<dbReference type="GO" id="GO:0009073">
    <property type="term" value="P:aromatic amino acid family biosynthetic process"/>
    <property type="evidence" value="ECO:0007669"/>
    <property type="project" value="UniProtKB-KW"/>
</dbReference>
<dbReference type="GO" id="GO:0009423">
    <property type="term" value="P:chorismate biosynthetic process"/>
    <property type="evidence" value="ECO:0007669"/>
    <property type="project" value="UniProtKB-UniRule"/>
</dbReference>
<dbReference type="CDD" id="cd07304">
    <property type="entry name" value="Chorismate_synthase"/>
    <property type="match status" value="1"/>
</dbReference>
<dbReference type="FunFam" id="3.60.150.10:FF:000002">
    <property type="entry name" value="Chorismate synthase"/>
    <property type="match status" value="1"/>
</dbReference>
<dbReference type="Gene3D" id="3.60.150.10">
    <property type="entry name" value="Chorismate synthase AroC"/>
    <property type="match status" value="1"/>
</dbReference>
<dbReference type="HAMAP" id="MF_00300">
    <property type="entry name" value="Chorismate_synth"/>
    <property type="match status" value="1"/>
</dbReference>
<dbReference type="InterPro" id="IPR000453">
    <property type="entry name" value="Chorismate_synth"/>
</dbReference>
<dbReference type="InterPro" id="IPR035904">
    <property type="entry name" value="Chorismate_synth_AroC_sf"/>
</dbReference>
<dbReference type="InterPro" id="IPR020541">
    <property type="entry name" value="Chorismate_synthase_CS"/>
</dbReference>
<dbReference type="NCBIfam" id="TIGR00033">
    <property type="entry name" value="aroC"/>
    <property type="match status" value="1"/>
</dbReference>
<dbReference type="NCBIfam" id="NF003793">
    <property type="entry name" value="PRK05382.1"/>
    <property type="match status" value="1"/>
</dbReference>
<dbReference type="PANTHER" id="PTHR21085">
    <property type="entry name" value="CHORISMATE SYNTHASE"/>
    <property type="match status" value="1"/>
</dbReference>
<dbReference type="PANTHER" id="PTHR21085:SF0">
    <property type="entry name" value="CHORISMATE SYNTHASE"/>
    <property type="match status" value="1"/>
</dbReference>
<dbReference type="Pfam" id="PF01264">
    <property type="entry name" value="Chorismate_synt"/>
    <property type="match status" value="1"/>
</dbReference>
<dbReference type="PIRSF" id="PIRSF001456">
    <property type="entry name" value="Chorismate_synth"/>
    <property type="match status" value="1"/>
</dbReference>
<dbReference type="SUPFAM" id="SSF103263">
    <property type="entry name" value="Chorismate synthase, AroC"/>
    <property type="match status" value="1"/>
</dbReference>
<dbReference type="PROSITE" id="PS00787">
    <property type="entry name" value="CHORISMATE_SYNTHASE_1"/>
    <property type="match status" value="1"/>
</dbReference>
<dbReference type="PROSITE" id="PS00788">
    <property type="entry name" value="CHORISMATE_SYNTHASE_2"/>
    <property type="match status" value="1"/>
</dbReference>
<dbReference type="PROSITE" id="PS00789">
    <property type="entry name" value="CHORISMATE_SYNTHASE_3"/>
    <property type="match status" value="1"/>
</dbReference>
<evidence type="ECO:0000255" key="1">
    <source>
        <dbReference type="HAMAP-Rule" id="MF_00300"/>
    </source>
</evidence>
<sequence length="388" mass="42991">MRYLTSGESHGPQLTVIVEGIPANLEIKVEDINKEMFKRQGGYGRGRRMQIEKDTVEIVSGVRNGYTLGSPITMVVTNDDFTHWRKIMGAAPISEEERENMKRTITKPRPGHADLVGGMKYNHRDLRNVLERSSARETAARVAVGALCKVLLQQLDIDIYSRVVEIGGIKDKDFYDSETFKANLDRNDVRVIDDSIAQAMRDKIDEAKNEGDSIGGVVQVVVENMPVGVGSYVHYDRKLDGKIAQGVVSINAFKGVSFGEGFKAAEKPGSEIQDEILYNSEIGYYRGSNHLGGLEGGMSNGMPIIVNGVMKPIPTLYKPLNSVDINTKEDFKATIERSDSCAVPAASIVCEHVVAFEIAKALLEEFQSNHIEQLQQQIADRRQLNVEF</sequence>
<gene>
    <name evidence="1" type="primary">aroC</name>
    <name type="ordered locus">SaurJH1_1554</name>
</gene>
<keyword id="KW-0028">Amino-acid biosynthesis</keyword>
<keyword id="KW-0057">Aromatic amino acid biosynthesis</keyword>
<keyword id="KW-0274">FAD</keyword>
<keyword id="KW-0285">Flavoprotein</keyword>
<keyword id="KW-0288">FMN</keyword>
<keyword id="KW-0456">Lyase</keyword>
<keyword id="KW-0521">NADP</keyword>
<comment type="function">
    <text evidence="1">Catalyzes the anti-1,4-elimination of the C-3 phosphate and the C-6 proR hydrogen from 5-enolpyruvylshikimate-3-phosphate (EPSP) to yield chorismate, which is the branch point compound that serves as the starting substrate for the three terminal pathways of aromatic amino acid biosynthesis. This reaction introduces a second double bond into the aromatic ring system.</text>
</comment>
<comment type="catalytic activity">
    <reaction evidence="1">
        <text>5-O-(1-carboxyvinyl)-3-phosphoshikimate = chorismate + phosphate</text>
        <dbReference type="Rhea" id="RHEA:21020"/>
        <dbReference type="ChEBI" id="CHEBI:29748"/>
        <dbReference type="ChEBI" id="CHEBI:43474"/>
        <dbReference type="ChEBI" id="CHEBI:57701"/>
        <dbReference type="EC" id="4.2.3.5"/>
    </reaction>
</comment>
<comment type="cofactor">
    <cofactor evidence="1">
        <name>FMNH2</name>
        <dbReference type="ChEBI" id="CHEBI:57618"/>
    </cofactor>
    <text evidence="1">Reduced FMN (FMNH(2)).</text>
</comment>
<comment type="pathway">
    <text evidence="1">Metabolic intermediate biosynthesis; chorismate biosynthesis; chorismate from D-erythrose 4-phosphate and phosphoenolpyruvate: step 7/7.</text>
</comment>
<comment type="subunit">
    <text evidence="1">Homotetramer.</text>
</comment>
<comment type="similarity">
    <text evidence="1">Belongs to the chorismate synthase family.</text>
</comment>
<organism>
    <name type="scientific">Staphylococcus aureus (strain JH1)</name>
    <dbReference type="NCBI Taxonomy" id="359787"/>
    <lineage>
        <taxon>Bacteria</taxon>
        <taxon>Bacillati</taxon>
        <taxon>Bacillota</taxon>
        <taxon>Bacilli</taxon>
        <taxon>Bacillales</taxon>
        <taxon>Staphylococcaceae</taxon>
        <taxon>Staphylococcus</taxon>
    </lineage>
</organism>